<evidence type="ECO:0000250" key="1">
    <source>
        <dbReference type="UniProtKB" id="Q01466"/>
    </source>
</evidence>
<evidence type="ECO:0000255" key="2"/>
<evidence type="ECO:0000269" key="3">
    <source>
    </source>
</evidence>
<evidence type="ECO:0000305" key="4"/>
<evidence type="ECO:0000312" key="5">
    <source>
        <dbReference type="PIR" id="JC4595"/>
    </source>
</evidence>
<proteinExistence type="inferred from homology"/>
<accession>P84480</accession>
<organism>
    <name type="scientific">Geobacillus stearothermophilus</name>
    <name type="common">Bacillus stearothermophilus</name>
    <dbReference type="NCBI Taxonomy" id="1422"/>
    <lineage>
        <taxon>Bacteria</taxon>
        <taxon>Bacillati</taxon>
        <taxon>Bacillota</taxon>
        <taxon>Bacilli</taxon>
        <taxon>Bacillales</taxon>
        <taxon>Anoxybacillaceae</taxon>
        <taxon>Geobacillus</taxon>
    </lineage>
</organism>
<sequence>MPNKRLMLLLLCIIILVAMIGFSLKGGRNTTWPEKVIGDTTGVFQNIFHTPAEFFAGIFENINDLKNTYKENERLREKLDGQTQYEAKLQELEEENKSLRDELGHVKSIKDYKPILATVIARSPDNWAKQVTINKGTQQNVAKDMAVTNEKGALIGKIKSSGLNNFTSAVQLLSDTDRNNRVATKISGKKGSKGYGLIEGYDKEKKRLKMTIIERKDKQDVKKGDLIETSGTGGVFPEGLTIGEVTDIESDSYGLTKVAYVKPAADLTDLNNVIVVNRDVPTVDTEEEGS</sequence>
<gene>
    <name evidence="1" type="primary">mreC</name>
</gene>
<keyword id="KW-0133">Cell shape</keyword>
<keyword id="KW-0175">Coiled coil</keyword>
<keyword id="KW-0732">Signal</keyword>
<dbReference type="PIR" id="JC4595">
    <property type="entry name" value="JC4595"/>
</dbReference>
<dbReference type="BMRB" id="P84480"/>
<dbReference type="SMR" id="P84480"/>
<dbReference type="GO" id="GO:0005886">
    <property type="term" value="C:plasma membrane"/>
    <property type="evidence" value="ECO:0007669"/>
    <property type="project" value="TreeGrafter"/>
</dbReference>
<dbReference type="GO" id="GO:0016504">
    <property type="term" value="F:peptidase activator activity"/>
    <property type="evidence" value="ECO:0000315"/>
    <property type="project" value="UniProtKB"/>
</dbReference>
<dbReference type="GO" id="GO:0008360">
    <property type="term" value="P:regulation of cell shape"/>
    <property type="evidence" value="ECO:0000250"/>
    <property type="project" value="UniProtKB"/>
</dbReference>
<dbReference type="Gene3D" id="2.40.10.340">
    <property type="entry name" value="Rod shape-determining protein MreC, domain 1"/>
    <property type="match status" value="1"/>
</dbReference>
<dbReference type="Gene3D" id="2.40.10.350">
    <property type="entry name" value="Rod shape-determining protein MreC, domain 2"/>
    <property type="match status" value="1"/>
</dbReference>
<dbReference type="Gene3D" id="1.20.5.490">
    <property type="entry name" value="Single helix bin"/>
    <property type="match status" value="1"/>
</dbReference>
<dbReference type="InterPro" id="IPR042177">
    <property type="entry name" value="Cell/Rod_1"/>
</dbReference>
<dbReference type="InterPro" id="IPR042175">
    <property type="entry name" value="Cell/Rod_MreC_2"/>
</dbReference>
<dbReference type="InterPro" id="IPR007221">
    <property type="entry name" value="MreC"/>
</dbReference>
<dbReference type="InterPro" id="IPR055342">
    <property type="entry name" value="MreC_beta-barrel_core"/>
</dbReference>
<dbReference type="NCBIfam" id="TIGR00219">
    <property type="entry name" value="mreC"/>
    <property type="match status" value="1"/>
</dbReference>
<dbReference type="PANTHER" id="PTHR34138">
    <property type="entry name" value="CELL SHAPE-DETERMINING PROTEIN MREC"/>
    <property type="match status" value="1"/>
</dbReference>
<dbReference type="PANTHER" id="PTHR34138:SF1">
    <property type="entry name" value="CELL SHAPE-DETERMINING PROTEIN MREC"/>
    <property type="match status" value="1"/>
</dbReference>
<dbReference type="Pfam" id="PF04085">
    <property type="entry name" value="MreC"/>
    <property type="match status" value="1"/>
</dbReference>
<dbReference type="PIRSF" id="PIRSF038471">
    <property type="entry name" value="MreC"/>
    <property type="match status" value="1"/>
</dbReference>
<name>MREC_GEOSE</name>
<reference evidence="4 5" key="1">
    <citation type="journal article" date="1996" name="Biosci. Biotechnol. Biochem.">
        <title>Bacillus stearothermophilus cell shape determinant gene, mreC and mreD, and their stimulation of protease production in Bacillus subtilis.</title>
        <authorList>
            <person name="Kubo M."/>
            <person name="Pierro D.J."/>
            <person name="Mochizuki Y."/>
            <person name="Kojima T."/>
            <person name="Yamazaki T."/>
            <person name="Satoh S."/>
            <person name="Takizawa N."/>
            <person name="Kiyohara H."/>
        </authorList>
    </citation>
    <scope>NUCLEOTIDE SEQUENCE [GENOMIC DNA]</scope>
    <scope>FUNCTION</scope>
    <source>
        <strain>HA19</strain>
    </source>
</reference>
<protein>
    <recommendedName>
        <fullName evidence="5">Cell shape-determining protein MreC</fullName>
    </recommendedName>
    <alternativeName>
        <fullName evidence="1">Cell shape protein MreC</fullName>
    </alternativeName>
    <alternativeName>
        <fullName evidence="1">Rod shape-determining protein MreC</fullName>
    </alternativeName>
</protein>
<comment type="function">
    <text evidence="1 3">Involved in formation and maintenance of cell shape. Regulates protease expression and stimulates the neutral protease production in Bacilli together with MreD.</text>
</comment>
<comment type="similarity">
    <text evidence="4">Belongs to the MreC family.</text>
</comment>
<feature type="signal peptide" evidence="2">
    <location>
        <begin position="1"/>
        <end position="23"/>
    </location>
</feature>
<feature type="chain" id="PRO_0000418057" description="Cell shape-determining protein MreC" evidence="2">
    <location>
        <begin position="24"/>
        <end position="290"/>
    </location>
</feature>
<feature type="coiled-coil region" evidence="2">
    <location>
        <begin position="58"/>
        <end position="111"/>
    </location>
</feature>